<keyword id="KW-0479">Metal-binding</keyword>
<keyword id="KW-1185">Reference proteome</keyword>
<keyword id="KW-0687">Ribonucleoprotein</keyword>
<keyword id="KW-0689">Ribosomal protein</keyword>
<keyword id="KW-0694">RNA-binding</keyword>
<keyword id="KW-0699">rRNA-binding</keyword>
<keyword id="KW-0862">Zinc</keyword>
<proteinExistence type="inferred from homology"/>
<reference key="1">
    <citation type="journal article" date="2007" name="PLoS ONE">
        <title>The complete genome sequence and analysis of the Epsilonproteobacterium Arcobacter butzleri.</title>
        <authorList>
            <person name="Miller W.G."/>
            <person name="Parker C.T."/>
            <person name="Rubenfield M."/>
            <person name="Mendz G.L."/>
            <person name="Woesten M.M.S.M."/>
            <person name="Ussery D.W."/>
            <person name="Stolz J.F."/>
            <person name="Binnewies T.T."/>
            <person name="Hallin P.F."/>
            <person name="Wang G."/>
            <person name="Malek J.A."/>
            <person name="Rogosin A."/>
            <person name="Stanker L.H."/>
            <person name="Mandrell R.E."/>
        </authorList>
    </citation>
    <scope>NUCLEOTIDE SEQUENCE [LARGE SCALE GENOMIC DNA]</scope>
    <source>
        <strain>RM4018</strain>
    </source>
</reference>
<feature type="chain" id="PRO_1000067923" description="Small ribosomal subunit protein uS14">
    <location>
        <begin position="1"/>
        <end position="61"/>
    </location>
</feature>
<feature type="binding site" evidence="1">
    <location>
        <position position="24"/>
    </location>
    <ligand>
        <name>Zn(2+)</name>
        <dbReference type="ChEBI" id="CHEBI:29105"/>
    </ligand>
</feature>
<feature type="binding site" evidence="1">
    <location>
        <position position="27"/>
    </location>
    <ligand>
        <name>Zn(2+)</name>
        <dbReference type="ChEBI" id="CHEBI:29105"/>
    </ligand>
</feature>
<feature type="binding site" evidence="1">
    <location>
        <position position="40"/>
    </location>
    <ligand>
        <name>Zn(2+)</name>
        <dbReference type="ChEBI" id="CHEBI:29105"/>
    </ligand>
</feature>
<feature type="binding site" evidence="1">
    <location>
        <position position="43"/>
    </location>
    <ligand>
        <name>Zn(2+)</name>
        <dbReference type="ChEBI" id="CHEBI:29105"/>
    </ligand>
</feature>
<dbReference type="EMBL" id="CP000361">
    <property type="protein sequence ID" value="ABV67030.1"/>
    <property type="molecule type" value="Genomic_DNA"/>
</dbReference>
<dbReference type="RefSeq" id="WP_004510833.1">
    <property type="nucleotide sequence ID" value="NC_009850.1"/>
</dbReference>
<dbReference type="SMR" id="A8ESV6"/>
<dbReference type="STRING" id="367737.Abu_0765"/>
<dbReference type="GeneID" id="24303865"/>
<dbReference type="KEGG" id="abu:Abu_0765"/>
<dbReference type="eggNOG" id="COG0199">
    <property type="taxonomic scope" value="Bacteria"/>
</dbReference>
<dbReference type="HOGENOM" id="CLU_139869_3_0_7"/>
<dbReference type="Proteomes" id="UP000001136">
    <property type="component" value="Chromosome"/>
</dbReference>
<dbReference type="GO" id="GO:0005737">
    <property type="term" value="C:cytoplasm"/>
    <property type="evidence" value="ECO:0007669"/>
    <property type="project" value="UniProtKB-ARBA"/>
</dbReference>
<dbReference type="GO" id="GO:0015935">
    <property type="term" value="C:small ribosomal subunit"/>
    <property type="evidence" value="ECO:0007669"/>
    <property type="project" value="TreeGrafter"/>
</dbReference>
<dbReference type="GO" id="GO:0019843">
    <property type="term" value="F:rRNA binding"/>
    <property type="evidence" value="ECO:0007669"/>
    <property type="project" value="UniProtKB-UniRule"/>
</dbReference>
<dbReference type="GO" id="GO:0003735">
    <property type="term" value="F:structural constituent of ribosome"/>
    <property type="evidence" value="ECO:0007669"/>
    <property type="project" value="InterPro"/>
</dbReference>
<dbReference type="GO" id="GO:0008270">
    <property type="term" value="F:zinc ion binding"/>
    <property type="evidence" value="ECO:0007669"/>
    <property type="project" value="UniProtKB-UniRule"/>
</dbReference>
<dbReference type="GO" id="GO:0006412">
    <property type="term" value="P:translation"/>
    <property type="evidence" value="ECO:0007669"/>
    <property type="project" value="UniProtKB-UniRule"/>
</dbReference>
<dbReference type="FunFam" id="4.10.830.10:FF:000001">
    <property type="entry name" value="30S ribosomal protein S14 type Z"/>
    <property type="match status" value="1"/>
</dbReference>
<dbReference type="Gene3D" id="4.10.830.10">
    <property type="entry name" value="30s Ribosomal Protein S14, Chain N"/>
    <property type="match status" value="1"/>
</dbReference>
<dbReference type="HAMAP" id="MF_01364_B">
    <property type="entry name" value="Ribosomal_uS14_2_B"/>
    <property type="match status" value="1"/>
</dbReference>
<dbReference type="InterPro" id="IPR001209">
    <property type="entry name" value="Ribosomal_uS14"/>
</dbReference>
<dbReference type="InterPro" id="IPR023053">
    <property type="entry name" value="Ribosomal_uS14_bact"/>
</dbReference>
<dbReference type="InterPro" id="IPR018271">
    <property type="entry name" value="Ribosomal_uS14_CS"/>
</dbReference>
<dbReference type="InterPro" id="IPR043140">
    <property type="entry name" value="Ribosomal_uS14_sf"/>
</dbReference>
<dbReference type="NCBIfam" id="NF005974">
    <property type="entry name" value="PRK08061.1"/>
    <property type="match status" value="1"/>
</dbReference>
<dbReference type="PANTHER" id="PTHR19836">
    <property type="entry name" value="30S RIBOSOMAL PROTEIN S14"/>
    <property type="match status" value="1"/>
</dbReference>
<dbReference type="PANTHER" id="PTHR19836:SF19">
    <property type="entry name" value="SMALL RIBOSOMAL SUBUNIT PROTEIN US14M"/>
    <property type="match status" value="1"/>
</dbReference>
<dbReference type="Pfam" id="PF00253">
    <property type="entry name" value="Ribosomal_S14"/>
    <property type="match status" value="1"/>
</dbReference>
<dbReference type="SUPFAM" id="SSF57716">
    <property type="entry name" value="Glucocorticoid receptor-like (DNA-binding domain)"/>
    <property type="match status" value="1"/>
</dbReference>
<dbReference type="PROSITE" id="PS00527">
    <property type="entry name" value="RIBOSOMAL_S14"/>
    <property type="match status" value="1"/>
</dbReference>
<sequence length="61" mass="6959">MAKKSMIAKQQRTPKFAVRAYTRCSVCGRPHSVYRDFGLCRVCLRKMANEGLLPGVRKASW</sequence>
<evidence type="ECO:0000255" key="1">
    <source>
        <dbReference type="HAMAP-Rule" id="MF_01364"/>
    </source>
</evidence>
<evidence type="ECO:0000305" key="2"/>
<name>RS14Z_ALIB4</name>
<accession>A8ESV6</accession>
<protein>
    <recommendedName>
        <fullName evidence="1">Small ribosomal subunit protein uS14</fullName>
    </recommendedName>
    <alternativeName>
        <fullName evidence="2">30S ribosomal protein S14 type Z</fullName>
    </alternativeName>
</protein>
<comment type="function">
    <text evidence="1">Binds 16S rRNA, required for the assembly of 30S particles and may also be responsible for determining the conformation of the 16S rRNA at the A site.</text>
</comment>
<comment type="cofactor">
    <cofactor evidence="1">
        <name>Zn(2+)</name>
        <dbReference type="ChEBI" id="CHEBI:29105"/>
    </cofactor>
    <text evidence="1">Binds 1 zinc ion per subunit.</text>
</comment>
<comment type="subunit">
    <text evidence="1">Part of the 30S ribosomal subunit. Contacts proteins S3 and S10.</text>
</comment>
<comment type="similarity">
    <text evidence="1">Belongs to the universal ribosomal protein uS14 family. Zinc-binding uS14 subfamily.</text>
</comment>
<organism>
    <name type="scientific">Aliarcobacter butzleri (strain RM4018)</name>
    <name type="common">Arcobacter butzleri</name>
    <dbReference type="NCBI Taxonomy" id="367737"/>
    <lineage>
        <taxon>Bacteria</taxon>
        <taxon>Pseudomonadati</taxon>
        <taxon>Campylobacterota</taxon>
        <taxon>Epsilonproteobacteria</taxon>
        <taxon>Campylobacterales</taxon>
        <taxon>Arcobacteraceae</taxon>
        <taxon>Aliarcobacter</taxon>
    </lineage>
</organism>
<gene>
    <name evidence="1" type="primary">rpsZ</name>
    <name evidence="1" type="synonym">rpsN</name>
    <name type="ordered locus">Abu_0765</name>
</gene>